<proteinExistence type="inferred from homology"/>
<evidence type="ECO:0000255" key="1">
    <source>
        <dbReference type="HAMAP-Rule" id="MF_00168"/>
    </source>
</evidence>
<keyword id="KW-0328">Glycosyltransferase</keyword>
<keyword id="KW-0479">Metal-binding</keyword>
<keyword id="KW-0671">Queuosine biosynthesis</keyword>
<keyword id="KW-0808">Transferase</keyword>
<keyword id="KW-0819">tRNA processing</keyword>
<keyword id="KW-0862">Zinc</keyword>
<protein>
    <recommendedName>
        <fullName evidence="1">Queuine tRNA-ribosyltransferase</fullName>
        <ecNumber evidence="1">2.4.2.29</ecNumber>
    </recommendedName>
    <alternativeName>
        <fullName evidence="1">Guanine insertion enzyme</fullName>
    </alternativeName>
    <alternativeName>
        <fullName evidence="1">tRNA-guanine transglycosylase</fullName>
    </alternativeName>
</protein>
<organism>
    <name type="scientific">Methylacidiphilum infernorum (isolate V4)</name>
    <name type="common">Methylokorus infernorum (strain V4)</name>
    <dbReference type="NCBI Taxonomy" id="481448"/>
    <lineage>
        <taxon>Bacteria</taxon>
        <taxon>Pseudomonadati</taxon>
        <taxon>Verrucomicrobiota</taxon>
        <taxon>Methylacidiphilae</taxon>
        <taxon>Methylacidiphilales</taxon>
        <taxon>Methylacidiphilaceae</taxon>
        <taxon>Methylacidiphilum (ex Ratnadevi et al. 2023)</taxon>
    </lineage>
</organism>
<gene>
    <name evidence="1" type="primary">tgt</name>
    <name type="ordered locus">Minf_1938</name>
</gene>
<accession>B3DYE4</accession>
<dbReference type="EC" id="2.4.2.29" evidence="1"/>
<dbReference type="EMBL" id="CP000975">
    <property type="protein sequence ID" value="ACD83992.1"/>
    <property type="molecule type" value="Genomic_DNA"/>
</dbReference>
<dbReference type="RefSeq" id="WP_012464274.1">
    <property type="nucleotide sequence ID" value="NC_010794.1"/>
</dbReference>
<dbReference type="SMR" id="B3DYE4"/>
<dbReference type="STRING" id="481448.Minf_1938"/>
<dbReference type="KEGG" id="min:Minf_1938"/>
<dbReference type="eggNOG" id="COG0343">
    <property type="taxonomic scope" value="Bacteria"/>
</dbReference>
<dbReference type="HOGENOM" id="CLU_022060_0_1_0"/>
<dbReference type="OrthoDB" id="9805417at2"/>
<dbReference type="UniPathway" id="UPA00392"/>
<dbReference type="Proteomes" id="UP000009149">
    <property type="component" value="Chromosome"/>
</dbReference>
<dbReference type="GO" id="GO:0005829">
    <property type="term" value="C:cytosol"/>
    <property type="evidence" value="ECO:0007669"/>
    <property type="project" value="TreeGrafter"/>
</dbReference>
<dbReference type="GO" id="GO:0046872">
    <property type="term" value="F:metal ion binding"/>
    <property type="evidence" value="ECO:0007669"/>
    <property type="project" value="UniProtKB-KW"/>
</dbReference>
<dbReference type="GO" id="GO:0008479">
    <property type="term" value="F:tRNA-guanosine(34) queuine transglycosylase activity"/>
    <property type="evidence" value="ECO:0007669"/>
    <property type="project" value="UniProtKB-UniRule"/>
</dbReference>
<dbReference type="GO" id="GO:0008616">
    <property type="term" value="P:queuosine biosynthetic process"/>
    <property type="evidence" value="ECO:0007669"/>
    <property type="project" value="UniProtKB-UniRule"/>
</dbReference>
<dbReference type="GO" id="GO:0002099">
    <property type="term" value="P:tRNA wobble guanine modification"/>
    <property type="evidence" value="ECO:0007669"/>
    <property type="project" value="TreeGrafter"/>
</dbReference>
<dbReference type="GO" id="GO:0101030">
    <property type="term" value="P:tRNA-guanine transglycosylation"/>
    <property type="evidence" value="ECO:0007669"/>
    <property type="project" value="InterPro"/>
</dbReference>
<dbReference type="Gene3D" id="3.20.20.105">
    <property type="entry name" value="Queuine tRNA-ribosyltransferase-like"/>
    <property type="match status" value="1"/>
</dbReference>
<dbReference type="HAMAP" id="MF_00168">
    <property type="entry name" value="Q_tRNA_Tgt"/>
    <property type="match status" value="1"/>
</dbReference>
<dbReference type="InterPro" id="IPR050076">
    <property type="entry name" value="ArchSynthase1/Queuine_TRR"/>
</dbReference>
<dbReference type="InterPro" id="IPR004803">
    <property type="entry name" value="TGT"/>
</dbReference>
<dbReference type="InterPro" id="IPR036511">
    <property type="entry name" value="TGT-like_sf"/>
</dbReference>
<dbReference type="InterPro" id="IPR002616">
    <property type="entry name" value="tRNA_ribo_trans-like"/>
</dbReference>
<dbReference type="NCBIfam" id="TIGR00430">
    <property type="entry name" value="Q_tRNA_tgt"/>
    <property type="match status" value="1"/>
</dbReference>
<dbReference type="NCBIfam" id="TIGR00449">
    <property type="entry name" value="tgt_general"/>
    <property type="match status" value="1"/>
</dbReference>
<dbReference type="PANTHER" id="PTHR46499">
    <property type="entry name" value="QUEUINE TRNA-RIBOSYLTRANSFERASE"/>
    <property type="match status" value="1"/>
</dbReference>
<dbReference type="PANTHER" id="PTHR46499:SF1">
    <property type="entry name" value="QUEUINE TRNA-RIBOSYLTRANSFERASE"/>
    <property type="match status" value="1"/>
</dbReference>
<dbReference type="Pfam" id="PF01702">
    <property type="entry name" value="TGT"/>
    <property type="match status" value="1"/>
</dbReference>
<dbReference type="SUPFAM" id="SSF51713">
    <property type="entry name" value="tRNA-guanine transglycosylase"/>
    <property type="match status" value="1"/>
</dbReference>
<reference key="1">
    <citation type="journal article" date="2008" name="Biol. Direct">
        <title>Complete genome sequence of the extremely acidophilic methanotroph isolate V4, Methylacidiphilum infernorum, a representative of the bacterial phylum Verrucomicrobia.</title>
        <authorList>
            <person name="Hou S."/>
            <person name="Makarova K.S."/>
            <person name="Saw J.H."/>
            <person name="Senin P."/>
            <person name="Ly B.V."/>
            <person name="Zhou Z."/>
            <person name="Ren Y."/>
            <person name="Wang J."/>
            <person name="Galperin M.Y."/>
            <person name="Omelchenko M.V."/>
            <person name="Wolf Y.I."/>
            <person name="Yutin N."/>
            <person name="Koonin E.V."/>
            <person name="Stott M.B."/>
            <person name="Mountain B.W."/>
            <person name="Crowe M.A."/>
            <person name="Smirnova A.V."/>
            <person name="Dunfield P.F."/>
            <person name="Feng L."/>
            <person name="Wang L."/>
            <person name="Alam M."/>
        </authorList>
    </citation>
    <scope>NUCLEOTIDE SEQUENCE [LARGE SCALE GENOMIC DNA]</scope>
    <source>
        <strain>Isolate V4</strain>
    </source>
</reference>
<name>TGT_METI4</name>
<sequence>MKFEVIQKSGGSRARLGRLLTPHGVVETPCFMPVGTSATVKAIFPKDLEEEGIKLILANAYHLLFRPGISVIKEFGGLHQFMGWNGAILTDSGGFQVFSLSPFCKIFPEGVRFKSPVDGSFLMLTPESAIHAQMELGSDIVMSLDHCPPWPSKEKDLLEATRRTIQWAKRGKETWMQQQEKLFSKPSASYSLFGIIQGGTDERLRLYCSEELMKIGFDGYAIGGLSVGEPHEESLAVVKTVSSFLDEKAPKYVMGMGQPWQIVQMVDLGIDLFDCVLPTRLARHGSAYVEEGIIHIKNARFRKDGSPLDSRCSCYACRKFSRGYIHHLLKSKEILGIMLLSMHNLLFYNRLMKEIRSFLAHGQWVDFLARWKDKKVTK</sequence>
<comment type="function">
    <text evidence="1">Catalyzes the base-exchange of a guanine (G) residue with the queuine precursor 7-aminomethyl-7-deazaguanine (PreQ1) at position 34 (anticodon wobble position) in tRNAs with GU(N) anticodons (tRNA-Asp, -Asn, -His and -Tyr). Catalysis occurs through a double-displacement mechanism. The nucleophile active site attacks the C1' of nucleotide 34 to detach the guanine base from the RNA, forming a covalent enzyme-RNA intermediate. The proton acceptor active site deprotonates the incoming PreQ1, allowing a nucleophilic attack on the C1' of the ribose to form the product. After dissociation, two additional enzymatic reactions on the tRNA convert PreQ1 to queuine (Q), resulting in the hypermodified nucleoside queuosine (7-(((4,5-cis-dihydroxy-2-cyclopenten-1-yl)amino)methyl)-7-deazaguanosine).</text>
</comment>
<comment type="catalytic activity">
    <reaction evidence="1">
        <text>7-aminomethyl-7-carbaguanine + guanosine(34) in tRNA = 7-aminomethyl-7-carbaguanosine(34) in tRNA + guanine</text>
        <dbReference type="Rhea" id="RHEA:24104"/>
        <dbReference type="Rhea" id="RHEA-COMP:10341"/>
        <dbReference type="Rhea" id="RHEA-COMP:10342"/>
        <dbReference type="ChEBI" id="CHEBI:16235"/>
        <dbReference type="ChEBI" id="CHEBI:58703"/>
        <dbReference type="ChEBI" id="CHEBI:74269"/>
        <dbReference type="ChEBI" id="CHEBI:82833"/>
        <dbReference type="EC" id="2.4.2.29"/>
    </reaction>
</comment>
<comment type="cofactor">
    <cofactor evidence="1">
        <name>Zn(2+)</name>
        <dbReference type="ChEBI" id="CHEBI:29105"/>
    </cofactor>
    <text evidence="1">Binds 1 zinc ion per subunit.</text>
</comment>
<comment type="pathway">
    <text evidence="1">tRNA modification; tRNA-queuosine biosynthesis.</text>
</comment>
<comment type="subunit">
    <text evidence="1">Homodimer. Within each dimer, one monomer is responsible for RNA recognition and catalysis, while the other monomer binds to the replacement base PreQ1.</text>
</comment>
<comment type="similarity">
    <text evidence="1">Belongs to the queuine tRNA-ribosyltransferase family.</text>
</comment>
<feature type="chain" id="PRO_1000097551" description="Queuine tRNA-ribosyltransferase">
    <location>
        <begin position="1"/>
        <end position="378"/>
    </location>
</feature>
<feature type="region of interest" description="RNA binding; important for wobble base 34 recognition" evidence="1">
    <location>
        <begin position="279"/>
        <end position="283"/>
    </location>
</feature>
<feature type="active site" description="Proton acceptor" evidence="1">
    <location>
        <position position="91"/>
    </location>
</feature>
<feature type="active site" description="Nucleophile" evidence="1">
    <location>
        <position position="274"/>
    </location>
</feature>
<feature type="binding site" evidence="1">
    <location>
        <begin position="91"/>
        <end position="95"/>
    </location>
    <ligand>
        <name>substrate</name>
    </ligand>
</feature>
<feature type="binding site" evidence="1">
    <location>
        <position position="145"/>
    </location>
    <ligand>
        <name>substrate</name>
    </ligand>
</feature>
<feature type="binding site" evidence="1">
    <location>
        <position position="197"/>
    </location>
    <ligand>
        <name>substrate</name>
    </ligand>
</feature>
<feature type="binding site" evidence="1">
    <location>
        <position position="224"/>
    </location>
    <ligand>
        <name>substrate</name>
    </ligand>
</feature>
<feature type="binding site" evidence="1">
    <location>
        <position position="312"/>
    </location>
    <ligand>
        <name>Zn(2+)</name>
        <dbReference type="ChEBI" id="CHEBI:29105"/>
    </ligand>
</feature>
<feature type="binding site" evidence="1">
    <location>
        <position position="314"/>
    </location>
    <ligand>
        <name>Zn(2+)</name>
        <dbReference type="ChEBI" id="CHEBI:29105"/>
    </ligand>
</feature>
<feature type="binding site" evidence="1">
    <location>
        <position position="317"/>
    </location>
    <ligand>
        <name>Zn(2+)</name>
        <dbReference type="ChEBI" id="CHEBI:29105"/>
    </ligand>
</feature>
<feature type="binding site" evidence="1">
    <location>
        <position position="343"/>
    </location>
    <ligand>
        <name>Zn(2+)</name>
        <dbReference type="ChEBI" id="CHEBI:29105"/>
    </ligand>
</feature>